<name>Y183_HELPH</name>
<organism>
    <name type="scientific">Helicobacter pylori (strain HPAG1)</name>
    <dbReference type="NCBI Taxonomy" id="357544"/>
    <lineage>
        <taxon>Bacteria</taxon>
        <taxon>Pseudomonadati</taxon>
        <taxon>Campylobacterota</taxon>
        <taxon>Epsilonproteobacteria</taxon>
        <taxon>Campylobacterales</taxon>
        <taxon>Helicobacteraceae</taxon>
        <taxon>Helicobacter</taxon>
    </lineage>
</organism>
<sequence length="177" mass="19815">MLEKLIERVLFATRWLLAPLCIAMSLVLVVLGYVFMKELWHMLSHLDTISETDLVLSALGLVDLLFMAGLVLMVLLASYESFVSKLDKVDASEITWLKHTDFNALKLKVSLSIVAISAIFLLKRYMSLEDVLSSIPKDTPLSHNPIFWQVVIHLVFVCSALLAAVTNNIAFSQNKGH</sequence>
<keyword id="KW-1003">Cell membrane</keyword>
<keyword id="KW-0472">Membrane</keyword>
<keyword id="KW-0812">Transmembrane</keyword>
<keyword id="KW-1133">Transmembrane helix</keyword>
<feature type="chain" id="PRO_1000009483" description="UPF0114 protein HPAG1_0183">
    <location>
        <begin position="1"/>
        <end position="177"/>
    </location>
</feature>
<feature type="transmembrane region" description="Helical" evidence="1">
    <location>
        <begin position="15"/>
        <end position="35"/>
    </location>
</feature>
<feature type="transmembrane region" description="Helical" evidence="1">
    <location>
        <begin position="54"/>
        <end position="74"/>
    </location>
</feature>
<feature type="transmembrane region" description="Helical" evidence="1">
    <location>
        <begin position="102"/>
        <end position="122"/>
    </location>
</feature>
<feature type="transmembrane region" description="Helical" evidence="1">
    <location>
        <begin position="145"/>
        <end position="165"/>
    </location>
</feature>
<reference key="1">
    <citation type="journal article" date="2006" name="Proc. Natl. Acad. Sci. U.S.A.">
        <title>The complete genome sequence of a chronic atrophic gastritis Helicobacter pylori strain: evolution during disease progression.</title>
        <authorList>
            <person name="Oh J.D."/>
            <person name="Kling-Baeckhed H."/>
            <person name="Giannakis M."/>
            <person name="Xu J."/>
            <person name="Fulton R.S."/>
            <person name="Fulton L.A."/>
            <person name="Cordum H.S."/>
            <person name="Wang C."/>
            <person name="Elliott G."/>
            <person name="Edwards J."/>
            <person name="Mardis E.R."/>
            <person name="Engstrand L.G."/>
            <person name="Gordon J.I."/>
        </authorList>
    </citation>
    <scope>NUCLEOTIDE SEQUENCE [LARGE SCALE GENOMIC DNA]</scope>
    <source>
        <strain>HPAG1</strain>
    </source>
</reference>
<evidence type="ECO:0000255" key="1">
    <source>
        <dbReference type="HAMAP-Rule" id="MF_00143"/>
    </source>
</evidence>
<comment type="subcellular location">
    <subcellularLocation>
        <location evidence="1">Cell membrane</location>
        <topology evidence="1">Multi-pass membrane protein</topology>
    </subcellularLocation>
</comment>
<comment type="similarity">
    <text evidence="1">Belongs to the UPF0114 family.</text>
</comment>
<accession>Q1CUX2</accession>
<gene>
    <name type="ordered locus">HPAG1_0183</name>
</gene>
<protein>
    <recommendedName>
        <fullName evidence="1">UPF0114 protein HPAG1_0183</fullName>
    </recommendedName>
</protein>
<dbReference type="EMBL" id="CP000241">
    <property type="protein sequence ID" value="ABF84250.1"/>
    <property type="molecule type" value="Genomic_DNA"/>
</dbReference>
<dbReference type="RefSeq" id="WP_000890445.1">
    <property type="nucleotide sequence ID" value="NC_008086.1"/>
</dbReference>
<dbReference type="KEGG" id="hpa:HPAG1_0183"/>
<dbReference type="HOGENOM" id="CLU_097887_1_0_7"/>
<dbReference type="GO" id="GO:0005886">
    <property type="term" value="C:plasma membrane"/>
    <property type="evidence" value="ECO:0007669"/>
    <property type="project" value="UniProtKB-SubCell"/>
</dbReference>
<dbReference type="HAMAP" id="MF_00143">
    <property type="entry name" value="UPF0114"/>
    <property type="match status" value="1"/>
</dbReference>
<dbReference type="InterPro" id="IPR005134">
    <property type="entry name" value="UPF0114"/>
</dbReference>
<dbReference type="InterPro" id="IPR020761">
    <property type="entry name" value="UPF0114_bac"/>
</dbReference>
<dbReference type="NCBIfam" id="TIGR00645">
    <property type="entry name" value="HI0507"/>
    <property type="match status" value="1"/>
</dbReference>
<dbReference type="PANTHER" id="PTHR38596">
    <property type="entry name" value="UPF0114 PROTEIN YQHA"/>
    <property type="match status" value="1"/>
</dbReference>
<dbReference type="PANTHER" id="PTHR38596:SF1">
    <property type="entry name" value="UPF0114 PROTEIN YQHA"/>
    <property type="match status" value="1"/>
</dbReference>
<dbReference type="Pfam" id="PF03350">
    <property type="entry name" value="UPF0114"/>
    <property type="match status" value="1"/>
</dbReference>
<proteinExistence type="inferred from homology"/>